<dbReference type="EC" id="2.7.8.-"/>
<dbReference type="EMBL" id="L22883">
    <property type="protein sequence ID" value="AAA22003.1"/>
    <property type="molecule type" value="Genomic_DNA"/>
</dbReference>
<dbReference type="EMBL" id="BA000019">
    <property type="protein sequence ID" value="BAB77058.1"/>
    <property type="status" value="ALT_INIT"/>
    <property type="molecule type" value="Genomic_DNA"/>
</dbReference>
<dbReference type="PIR" id="AG2475">
    <property type="entry name" value="AG2475"/>
</dbReference>
<dbReference type="PIR" id="E55210">
    <property type="entry name" value="E55210"/>
</dbReference>
<dbReference type="RefSeq" id="WP_044522635.1">
    <property type="nucleotide sequence ID" value="NZ_RSCN01000005.1"/>
</dbReference>
<dbReference type="SMR" id="P37695"/>
<dbReference type="STRING" id="103690.gene:10497421"/>
<dbReference type="KEGG" id="ana:all5359"/>
<dbReference type="eggNOG" id="COG2091">
    <property type="taxonomic scope" value="Bacteria"/>
</dbReference>
<dbReference type="OrthoDB" id="9808281at2"/>
<dbReference type="Proteomes" id="UP000002483">
    <property type="component" value="Chromosome"/>
</dbReference>
<dbReference type="GO" id="GO:0005829">
    <property type="term" value="C:cytosol"/>
    <property type="evidence" value="ECO:0007669"/>
    <property type="project" value="TreeGrafter"/>
</dbReference>
<dbReference type="GO" id="GO:0008897">
    <property type="term" value="F:holo-[acyl-carrier-protein] synthase activity"/>
    <property type="evidence" value="ECO:0007669"/>
    <property type="project" value="InterPro"/>
</dbReference>
<dbReference type="GO" id="GO:0000287">
    <property type="term" value="F:magnesium ion binding"/>
    <property type="evidence" value="ECO:0007669"/>
    <property type="project" value="InterPro"/>
</dbReference>
<dbReference type="GO" id="GO:0019878">
    <property type="term" value="P:lysine biosynthetic process via aminoadipic acid"/>
    <property type="evidence" value="ECO:0007669"/>
    <property type="project" value="TreeGrafter"/>
</dbReference>
<dbReference type="Gene3D" id="3.90.470.20">
    <property type="entry name" value="4'-phosphopantetheinyl transferase domain"/>
    <property type="match status" value="2"/>
</dbReference>
<dbReference type="InterPro" id="IPR008278">
    <property type="entry name" value="4-PPantetheinyl_Trfase_dom"/>
</dbReference>
<dbReference type="InterPro" id="IPR037143">
    <property type="entry name" value="4-PPantetheinyl_Trfase_dom_sf"/>
</dbReference>
<dbReference type="InterPro" id="IPR055066">
    <property type="entry name" value="AASDHPPT_N"/>
</dbReference>
<dbReference type="InterPro" id="IPR053581">
    <property type="entry name" value="P-Pant_Transferase_HetI-like"/>
</dbReference>
<dbReference type="InterPro" id="IPR050559">
    <property type="entry name" value="P-Pant_transferase_sf"/>
</dbReference>
<dbReference type="NCBIfam" id="NF042922">
    <property type="entry name" value="4PPT_HetI"/>
    <property type="match status" value="1"/>
</dbReference>
<dbReference type="PANTHER" id="PTHR12215:SF10">
    <property type="entry name" value="L-AMINOADIPATE-SEMIALDEHYDE DEHYDROGENASE-PHOSPHOPANTETHEINYL TRANSFERASE"/>
    <property type="match status" value="1"/>
</dbReference>
<dbReference type="PANTHER" id="PTHR12215">
    <property type="entry name" value="PHOSPHOPANTETHEINE TRANSFERASE"/>
    <property type="match status" value="1"/>
</dbReference>
<dbReference type="Pfam" id="PF22624">
    <property type="entry name" value="AASDHPPT_N"/>
    <property type="match status" value="1"/>
</dbReference>
<dbReference type="Pfam" id="PF01648">
    <property type="entry name" value="ACPS"/>
    <property type="match status" value="1"/>
</dbReference>
<dbReference type="SUPFAM" id="SSF56214">
    <property type="entry name" value="4'-phosphopantetheinyl transferase"/>
    <property type="match status" value="2"/>
</dbReference>
<proteinExistence type="inferred from homology"/>
<comment type="function">
    <text>Probably activates the acyl carrier protein (ACP) domain of HetM, by transferring the 4'-phosphopantetheinyl moiety of coenzyme A (CoA) to a serine residue. May be required for maintaining vegetative growth and probably acts via HetN to inhibit differentiation.</text>
</comment>
<comment type="catalytic activity">
    <reaction>
        <text>apo-[peptidyl-carrier protein] + CoA = holo-[peptidyl-carrier protein] + adenosine 3',5'-bisphosphate + H(+)</text>
        <dbReference type="Rhea" id="RHEA:46228"/>
        <dbReference type="Rhea" id="RHEA-COMP:11479"/>
        <dbReference type="Rhea" id="RHEA-COMP:11480"/>
        <dbReference type="ChEBI" id="CHEBI:15378"/>
        <dbReference type="ChEBI" id="CHEBI:29999"/>
        <dbReference type="ChEBI" id="CHEBI:57287"/>
        <dbReference type="ChEBI" id="CHEBI:58343"/>
        <dbReference type="ChEBI" id="CHEBI:64479"/>
    </reaction>
</comment>
<comment type="cofactor">
    <cofactor evidence="1">
        <name>Mg(2+)</name>
        <dbReference type="ChEBI" id="CHEBI:18420"/>
    </cofactor>
</comment>
<comment type="similarity">
    <text evidence="2">Belongs to the P-Pant transferase superfamily. Gsp/Sfp/HetI/AcpT family.</text>
</comment>
<comment type="sequence caution" evidence="2">
    <conflict type="erroneous initiation">
        <sequence resource="EMBL-CDS" id="BAB77058"/>
    </conflict>
</comment>
<protein>
    <recommendedName>
        <fullName>4'-phosphopantetheinyl transferase HetI</fullName>
        <ecNumber>2.7.8.-</ecNumber>
    </recommendedName>
</protein>
<feature type="chain" id="PRO_0000206075" description="4'-phosphopantetheinyl transferase HetI">
    <location>
        <begin position="1"/>
        <end position="237"/>
    </location>
</feature>
<feature type="binding site" evidence="1">
    <location>
        <position position="128"/>
    </location>
    <ligand>
        <name>Mg(2+)</name>
        <dbReference type="ChEBI" id="CHEBI:18420"/>
    </ligand>
</feature>
<feature type="binding site" evidence="1">
    <location>
        <position position="130"/>
    </location>
    <ligand>
        <name>Mg(2+)</name>
        <dbReference type="ChEBI" id="CHEBI:18420"/>
    </ligand>
</feature>
<feature type="binding site" evidence="1">
    <location>
        <position position="174"/>
    </location>
    <ligand>
        <name>Mg(2+)</name>
        <dbReference type="ChEBI" id="CHEBI:18420"/>
    </ligand>
</feature>
<name>HETI_NOSS1</name>
<evidence type="ECO:0000250" key="1"/>
<evidence type="ECO:0000305" key="2"/>
<keyword id="KW-0460">Magnesium</keyword>
<keyword id="KW-0479">Metal-binding</keyword>
<keyword id="KW-1185">Reference proteome</keyword>
<keyword id="KW-0808">Transferase</keyword>
<organism>
    <name type="scientific">Nostoc sp. (strain PCC 7120 / SAG 25.82 / UTEX 2576)</name>
    <dbReference type="NCBI Taxonomy" id="103690"/>
    <lineage>
        <taxon>Bacteria</taxon>
        <taxon>Bacillati</taxon>
        <taxon>Cyanobacteriota</taxon>
        <taxon>Cyanophyceae</taxon>
        <taxon>Nostocales</taxon>
        <taxon>Nostocaceae</taxon>
        <taxon>Nostoc</taxon>
    </lineage>
</organism>
<reference key="1">
    <citation type="journal article" date="1994" name="J. Bacteriol.">
        <title>Analysis of a Het- mutation in Anabaena sp. strain PCC 7120 implicates a secondary metabolite in the regulation of heterocyst spacing.</title>
        <authorList>
            <person name="Black T.A."/>
            <person name="Wolk C.P."/>
        </authorList>
    </citation>
    <scope>NUCLEOTIDE SEQUENCE [GENOMIC DNA]</scope>
</reference>
<reference key="2">
    <citation type="journal article" date="2001" name="DNA Res.">
        <title>Complete genomic sequence of the filamentous nitrogen-fixing cyanobacterium Anabaena sp. strain PCC 7120.</title>
        <authorList>
            <person name="Kaneko T."/>
            <person name="Nakamura Y."/>
            <person name="Wolk C.P."/>
            <person name="Kuritz T."/>
            <person name="Sasamoto S."/>
            <person name="Watanabe A."/>
            <person name="Iriguchi M."/>
            <person name="Ishikawa A."/>
            <person name="Kawashima K."/>
            <person name="Kimura T."/>
            <person name="Kishida Y."/>
            <person name="Kohara M."/>
            <person name="Matsumoto M."/>
            <person name="Matsuno A."/>
            <person name="Muraki A."/>
            <person name="Nakazaki N."/>
            <person name="Shimpo S."/>
            <person name="Sugimoto M."/>
            <person name="Takazawa M."/>
            <person name="Yamada M."/>
            <person name="Yasuda M."/>
            <person name="Tabata S."/>
        </authorList>
    </citation>
    <scope>NUCLEOTIDE SEQUENCE [LARGE SCALE GENOMIC DNA]</scope>
    <source>
        <strain>PCC 7120 / SAG 25.82 / UTEX 2576</strain>
    </source>
</reference>
<reference key="3">
    <citation type="journal article" date="1996" name="Chem. Biol.">
        <title>A new enzyme superfamily -- the phosphopantetheinyl transferases.</title>
        <authorList>
            <person name="Lambalot R.H."/>
            <person name="Gehring A.M."/>
            <person name="Flugel R.S."/>
            <person name="Zuber P."/>
            <person name="LaCelle M."/>
            <person name="Marahiel M.A."/>
            <person name="Reid R."/>
            <person name="Khosla C."/>
            <person name="Walsh C.T."/>
        </authorList>
    </citation>
    <scope>PROBABLE FUNCTION</scope>
</reference>
<gene>
    <name type="primary">hetI</name>
    <name type="ordered locus">all5359</name>
</gene>
<accession>P37695</accession>
<sequence length="237" mass="27108">MLQHTWLPKPPNLTLLSDEVHLWRIPLDQPESQLQDLAATLSSDELARANRFYFPEHRRRFTAGRGILRSILGGYLGVEPGQVKFDYESRGKPILGDRFAESGLLFNLSHSQNLALCAVNYTRQIGIDLEYLRPTSDLESLAKRFFLPREYELLRSLPDEQKQKIFFRYWTCKEAYLKATGDGIAKLEEIEIALTPTEPAKLQTAPAWSLLELVPDDNCVAAVAVAGFGWQPKFWHY</sequence>